<proteinExistence type="inferred from homology"/>
<feature type="chain" id="PRO_1000186767" description="Fe/S biogenesis protein NfuA">
    <location>
        <begin position="1"/>
        <end position="197"/>
    </location>
</feature>
<feature type="binding site" evidence="1">
    <location>
        <position position="155"/>
    </location>
    <ligand>
        <name>[4Fe-4S] cluster</name>
        <dbReference type="ChEBI" id="CHEBI:49883"/>
    </ligand>
</feature>
<feature type="binding site" evidence="1">
    <location>
        <position position="158"/>
    </location>
    <ligand>
        <name>[4Fe-4S] cluster</name>
        <dbReference type="ChEBI" id="CHEBI:49883"/>
    </ligand>
</feature>
<gene>
    <name evidence="1" type="primary">nfuA</name>
    <name type="ordered locus">Psyr_2466</name>
</gene>
<accession>Q4ZTL7</accession>
<dbReference type="EMBL" id="CP000075">
    <property type="protein sequence ID" value="AAY37505.1"/>
    <property type="molecule type" value="Genomic_DNA"/>
</dbReference>
<dbReference type="RefSeq" id="WP_011267703.1">
    <property type="nucleotide sequence ID" value="NC_007005.1"/>
</dbReference>
<dbReference type="RefSeq" id="YP_235543.1">
    <property type="nucleotide sequence ID" value="NC_007005.1"/>
</dbReference>
<dbReference type="SMR" id="Q4ZTL7"/>
<dbReference type="STRING" id="205918.Psyr_2466"/>
<dbReference type="KEGG" id="psb:Psyr_2466"/>
<dbReference type="PATRIC" id="fig|205918.7.peg.2525"/>
<dbReference type="eggNOG" id="COG0316">
    <property type="taxonomic scope" value="Bacteria"/>
</dbReference>
<dbReference type="eggNOG" id="COG0694">
    <property type="taxonomic scope" value="Bacteria"/>
</dbReference>
<dbReference type="HOGENOM" id="CLU_094569_0_0_6"/>
<dbReference type="OrthoDB" id="9785450at2"/>
<dbReference type="Proteomes" id="UP000000426">
    <property type="component" value="Chromosome"/>
</dbReference>
<dbReference type="GO" id="GO:0051539">
    <property type="term" value="F:4 iron, 4 sulfur cluster binding"/>
    <property type="evidence" value="ECO:0007669"/>
    <property type="project" value="UniProtKB-UniRule"/>
</dbReference>
<dbReference type="GO" id="GO:0005506">
    <property type="term" value="F:iron ion binding"/>
    <property type="evidence" value="ECO:0007669"/>
    <property type="project" value="InterPro"/>
</dbReference>
<dbReference type="GO" id="GO:0016226">
    <property type="term" value="P:iron-sulfur cluster assembly"/>
    <property type="evidence" value="ECO:0007669"/>
    <property type="project" value="UniProtKB-UniRule"/>
</dbReference>
<dbReference type="GO" id="GO:0051604">
    <property type="term" value="P:protein maturation"/>
    <property type="evidence" value="ECO:0007669"/>
    <property type="project" value="UniProtKB-UniRule"/>
</dbReference>
<dbReference type="Gene3D" id="3.30.300.130">
    <property type="entry name" value="Fe-S cluster assembly (FSCA)"/>
    <property type="match status" value="1"/>
</dbReference>
<dbReference type="Gene3D" id="2.60.300.12">
    <property type="entry name" value="HesB-like domain"/>
    <property type="match status" value="1"/>
</dbReference>
<dbReference type="HAMAP" id="MF_01637">
    <property type="entry name" value="Fe_S_biogen_NfuA"/>
    <property type="match status" value="1"/>
</dbReference>
<dbReference type="InterPro" id="IPR017726">
    <property type="entry name" value="Fe/S_biogenesis_protein_NfuA"/>
</dbReference>
<dbReference type="InterPro" id="IPR000361">
    <property type="entry name" value="FeS_biogenesis"/>
</dbReference>
<dbReference type="InterPro" id="IPR034904">
    <property type="entry name" value="FSCA_dom_sf"/>
</dbReference>
<dbReference type="InterPro" id="IPR035903">
    <property type="entry name" value="HesB-like_dom_sf"/>
</dbReference>
<dbReference type="InterPro" id="IPR001075">
    <property type="entry name" value="NIF_FeS_clus_asmbl_NifU_C"/>
</dbReference>
<dbReference type="NCBIfam" id="TIGR03341">
    <property type="entry name" value="YhgI_GntY"/>
    <property type="match status" value="1"/>
</dbReference>
<dbReference type="PANTHER" id="PTHR11178:SF51">
    <property type="entry name" value="FE_S BIOGENESIS PROTEIN NFUA"/>
    <property type="match status" value="1"/>
</dbReference>
<dbReference type="PANTHER" id="PTHR11178">
    <property type="entry name" value="IRON-SULFUR CLUSTER SCAFFOLD PROTEIN NFU-RELATED"/>
    <property type="match status" value="1"/>
</dbReference>
<dbReference type="Pfam" id="PF01521">
    <property type="entry name" value="Fe-S_biosyn"/>
    <property type="match status" value="1"/>
</dbReference>
<dbReference type="Pfam" id="PF01106">
    <property type="entry name" value="NifU"/>
    <property type="match status" value="1"/>
</dbReference>
<dbReference type="SUPFAM" id="SSF117916">
    <property type="entry name" value="Fe-S cluster assembly (FSCA) domain-like"/>
    <property type="match status" value="1"/>
</dbReference>
<dbReference type="SUPFAM" id="SSF89360">
    <property type="entry name" value="HesB-like domain"/>
    <property type="match status" value="1"/>
</dbReference>
<reference key="1">
    <citation type="journal article" date="2005" name="Proc. Natl. Acad. Sci. U.S.A.">
        <title>Comparison of the complete genome sequences of Pseudomonas syringae pv. syringae B728a and pv. tomato DC3000.</title>
        <authorList>
            <person name="Feil H."/>
            <person name="Feil W.S."/>
            <person name="Chain P."/>
            <person name="Larimer F."/>
            <person name="Dibartolo G."/>
            <person name="Copeland A."/>
            <person name="Lykidis A."/>
            <person name="Trong S."/>
            <person name="Nolan M."/>
            <person name="Goltsman E."/>
            <person name="Thiel J."/>
            <person name="Malfatti S."/>
            <person name="Loper J.E."/>
            <person name="Lapidus A."/>
            <person name="Detter J.C."/>
            <person name="Land M."/>
            <person name="Richardson P.M."/>
            <person name="Kyrpides N.C."/>
            <person name="Ivanova N."/>
            <person name="Lindow S.E."/>
        </authorList>
    </citation>
    <scope>NUCLEOTIDE SEQUENCE [LARGE SCALE GENOMIC DNA]</scope>
    <source>
        <strain>B728a</strain>
    </source>
</reference>
<sequence length="197" mass="21472">MTAITITDAAHDYLADLLEKQNTPGIGIRVFITQPGTQYAETCIAYCKPGEEKPEDKAIGLKSFTAWIDGFSEAFLDDAVVDYATDRMGGQLTIKAPNAKVPMVNADSPINERINYYLQTEINPGLASHGGQVTLIDVVEEETKNIAVLQFGGGCQGCGQADVTLKEGIERTLLERIPELSGVRDVTDHTQKENAYY</sequence>
<organism>
    <name type="scientific">Pseudomonas syringae pv. syringae (strain B728a)</name>
    <dbReference type="NCBI Taxonomy" id="205918"/>
    <lineage>
        <taxon>Bacteria</taxon>
        <taxon>Pseudomonadati</taxon>
        <taxon>Pseudomonadota</taxon>
        <taxon>Gammaproteobacteria</taxon>
        <taxon>Pseudomonadales</taxon>
        <taxon>Pseudomonadaceae</taxon>
        <taxon>Pseudomonas</taxon>
        <taxon>Pseudomonas syringae</taxon>
    </lineage>
</organism>
<protein>
    <recommendedName>
        <fullName evidence="1">Fe/S biogenesis protein NfuA</fullName>
    </recommendedName>
</protein>
<comment type="function">
    <text evidence="1">Involved in iron-sulfur cluster biogenesis. Binds a 4Fe-4S cluster, can transfer this cluster to apoproteins, and thereby intervenes in the maturation of Fe/S proteins. Could also act as a scaffold/chaperone for damaged Fe/S proteins.</text>
</comment>
<comment type="cofactor">
    <cofactor evidence="1">
        <name>[4Fe-4S] cluster</name>
        <dbReference type="ChEBI" id="CHEBI:49883"/>
    </cofactor>
    <text evidence="1">Binds 1 [4Fe-4S] cluster per subunit. The cluster is presumably bound at the interface of two monomers.</text>
</comment>
<comment type="subunit">
    <text evidence="1">Homodimer.</text>
</comment>
<comment type="similarity">
    <text evidence="1">Belongs to the NfuA family.</text>
</comment>
<evidence type="ECO:0000255" key="1">
    <source>
        <dbReference type="HAMAP-Rule" id="MF_01637"/>
    </source>
</evidence>
<name>NFUA_PSEU2</name>
<keyword id="KW-0004">4Fe-4S</keyword>
<keyword id="KW-0408">Iron</keyword>
<keyword id="KW-0411">Iron-sulfur</keyword>
<keyword id="KW-0479">Metal-binding</keyword>